<feature type="chain" id="PRO_0000128070" description="Uncharacterized protein AF_1873">
    <location>
        <begin position="1"/>
        <end position="390"/>
    </location>
</feature>
<organism>
    <name type="scientific">Archaeoglobus fulgidus (strain ATCC 49558 / DSM 4304 / JCM 9628 / NBRC 100126 / VC-16)</name>
    <dbReference type="NCBI Taxonomy" id="224325"/>
    <lineage>
        <taxon>Archaea</taxon>
        <taxon>Methanobacteriati</taxon>
        <taxon>Methanobacteriota</taxon>
        <taxon>Archaeoglobi</taxon>
        <taxon>Archaeoglobales</taxon>
        <taxon>Archaeoglobaceae</taxon>
        <taxon>Archaeoglobus</taxon>
    </lineage>
</organism>
<name>Y1873_ARCFU</name>
<protein>
    <recommendedName>
        <fullName>Uncharacterized protein AF_1873</fullName>
    </recommendedName>
</protein>
<reference key="1">
    <citation type="journal article" date="1997" name="Nature">
        <title>The complete genome sequence of the hyperthermophilic, sulphate-reducing archaeon Archaeoglobus fulgidus.</title>
        <authorList>
            <person name="Klenk H.-P."/>
            <person name="Clayton R.A."/>
            <person name="Tomb J.-F."/>
            <person name="White O."/>
            <person name="Nelson K.E."/>
            <person name="Ketchum K.A."/>
            <person name="Dodson R.J."/>
            <person name="Gwinn M.L."/>
            <person name="Hickey E.K."/>
            <person name="Peterson J.D."/>
            <person name="Richardson D.L."/>
            <person name="Kerlavage A.R."/>
            <person name="Graham D.E."/>
            <person name="Kyrpides N.C."/>
            <person name="Fleischmann R.D."/>
            <person name="Quackenbush J."/>
            <person name="Lee N.H."/>
            <person name="Sutton G.G."/>
            <person name="Gill S.R."/>
            <person name="Kirkness E.F."/>
            <person name="Dougherty B.A."/>
            <person name="McKenney K."/>
            <person name="Adams M.D."/>
            <person name="Loftus B.J."/>
            <person name="Peterson S.N."/>
            <person name="Reich C.I."/>
            <person name="McNeil L.K."/>
            <person name="Badger J.H."/>
            <person name="Glodek A."/>
            <person name="Zhou L."/>
            <person name="Overbeek R."/>
            <person name="Gocayne J.D."/>
            <person name="Weidman J.F."/>
            <person name="McDonald L.A."/>
            <person name="Utterback T.R."/>
            <person name="Cotton M.D."/>
            <person name="Spriggs T."/>
            <person name="Artiach P."/>
            <person name="Kaine B.P."/>
            <person name="Sykes S.M."/>
            <person name="Sadow P.W."/>
            <person name="D'Andrea K.P."/>
            <person name="Bowman C."/>
            <person name="Fujii C."/>
            <person name="Garland S.A."/>
            <person name="Mason T.M."/>
            <person name="Olsen G.J."/>
            <person name="Fraser C.M."/>
            <person name="Smith H.O."/>
            <person name="Woese C.R."/>
            <person name="Venter J.C."/>
        </authorList>
    </citation>
    <scope>NUCLEOTIDE SEQUENCE [LARGE SCALE GENOMIC DNA]</scope>
    <source>
        <strain>ATCC 49558 / DSM 4304 / JCM 9628 / NBRC 100126 / VC-16</strain>
    </source>
</reference>
<dbReference type="EMBL" id="AE000782">
    <property type="protein sequence ID" value="AAB89383.1"/>
    <property type="molecule type" value="Genomic_DNA"/>
</dbReference>
<dbReference type="PIR" id="H69483">
    <property type="entry name" value="H69483"/>
</dbReference>
<dbReference type="RefSeq" id="WP_010879366.1">
    <property type="nucleotide sequence ID" value="NC_000917.1"/>
</dbReference>
<dbReference type="STRING" id="224325.AF_1873"/>
<dbReference type="PaxDb" id="224325-AF_1873"/>
<dbReference type="EnsemblBacteria" id="AAB89383">
    <property type="protein sequence ID" value="AAB89383"/>
    <property type="gene ID" value="AF_1873"/>
</dbReference>
<dbReference type="KEGG" id="afu:AF_1873"/>
<dbReference type="eggNOG" id="arCOG06144">
    <property type="taxonomic scope" value="Archaea"/>
</dbReference>
<dbReference type="HOGENOM" id="CLU_707134_0_0_2"/>
<dbReference type="OrthoDB" id="371776at2157"/>
<dbReference type="Proteomes" id="UP000002199">
    <property type="component" value="Chromosome"/>
</dbReference>
<accession>O28406</accession>
<proteinExistence type="predicted"/>
<keyword id="KW-1185">Reference proteome</keyword>
<gene>
    <name type="ordered locus">AF_1873</name>
</gene>
<sequence length="390" mass="44774">MLKVKLSLPPDSTFLSQLIYESLLYLSGKKLAKFENGELLIESISKALETFDDERVGEIRIVMSGNDNINAKIFETFGIGGVKSRKTYYDLIALLKEHRDKISTKDESEIHLNIKGKDVFMDINSKSDGIAAPQLLKVDRYTGFSSLDTPYTSQQLTFYLSKEVALLALLGIYSSFVTNVRQQQQSYYYFLFFSPEEVAGLLNSPSLAEKFFLVKESVRESLRELLRRTTFNELLLIETTLNLELQRLMETENLDKISLTLFKIAHEGQTYKIYEQIPITVYRNPAFYETAKKYFRDPLKFSEKLRKAITQGVIPSALAILSTKNKYSEADNILKAIQMLYRFVVLGDLQGWFGFLRELNNAHSKLKNSSDGREKKRAGQYLNIVKEVAW</sequence>